<organism>
    <name type="scientific">Debaryomyces hansenii (strain ATCC 36239 / CBS 767 / BCRC 21394 / JCM 1990 / NBRC 0083 / IGC 2968)</name>
    <name type="common">Yeast</name>
    <name type="synonym">Torulaspora hansenii</name>
    <dbReference type="NCBI Taxonomy" id="284592"/>
    <lineage>
        <taxon>Eukaryota</taxon>
        <taxon>Fungi</taxon>
        <taxon>Dikarya</taxon>
        <taxon>Ascomycota</taxon>
        <taxon>Saccharomycotina</taxon>
        <taxon>Pichiomycetes</taxon>
        <taxon>Debaryomycetaceae</taxon>
        <taxon>Debaryomyces</taxon>
    </lineage>
</organism>
<gene>
    <name type="ordered locus">DEHA2G06622g</name>
</gene>
<keyword id="KW-0143">Chaperone</keyword>
<keyword id="KW-0312">Gluconeogenesis</keyword>
<keyword id="KW-0496">Mitochondrion</keyword>
<keyword id="KW-1185">Reference proteome</keyword>
<keyword id="KW-0809">Transit peptide</keyword>
<reference key="1">
    <citation type="journal article" date="2004" name="Nature">
        <title>Genome evolution in yeasts.</title>
        <authorList>
            <person name="Dujon B."/>
            <person name="Sherman D."/>
            <person name="Fischer G."/>
            <person name="Durrens P."/>
            <person name="Casaregola S."/>
            <person name="Lafontaine I."/>
            <person name="de Montigny J."/>
            <person name="Marck C."/>
            <person name="Neuveglise C."/>
            <person name="Talla E."/>
            <person name="Goffard N."/>
            <person name="Frangeul L."/>
            <person name="Aigle M."/>
            <person name="Anthouard V."/>
            <person name="Babour A."/>
            <person name="Barbe V."/>
            <person name="Barnay S."/>
            <person name="Blanchin S."/>
            <person name="Beckerich J.-M."/>
            <person name="Beyne E."/>
            <person name="Bleykasten C."/>
            <person name="Boisrame A."/>
            <person name="Boyer J."/>
            <person name="Cattolico L."/>
            <person name="Confanioleri F."/>
            <person name="de Daruvar A."/>
            <person name="Despons L."/>
            <person name="Fabre E."/>
            <person name="Fairhead C."/>
            <person name="Ferry-Dumazet H."/>
            <person name="Groppi A."/>
            <person name="Hantraye F."/>
            <person name="Hennequin C."/>
            <person name="Jauniaux N."/>
            <person name="Joyet P."/>
            <person name="Kachouri R."/>
            <person name="Kerrest A."/>
            <person name="Koszul R."/>
            <person name="Lemaire M."/>
            <person name="Lesur I."/>
            <person name="Ma L."/>
            <person name="Muller H."/>
            <person name="Nicaud J.-M."/>
            <person name="Nikolski M."/>
            <person name="Oztas S."/>
            <person name="Ozier-Kalogeropoulos O."/>
            <person name="Pellenz S."/>
            <person name="Potier S."/>
            <person name="Richard G.-F."/>
            <person name="Straub M.-L."/>
            <person name="Suleau A."/>
            <person name="Swennen D."/>
            <person name="Tekaia F."/>
            <person name="Wesolowski-Louvel M."/>
            <person name="Westhof E."/>
            <person name="Wirth B."/>
            <person name="Zeniou-Meyer M."/>
            <person name="Zivanovic Y."/>
            <person name="Bolotin-Fukuhara M."/>
            <person name="Thierry A."/>
            <person name="Bouchier C."/>
            <person name="Caudron B."/>
            <person name="Scarpelli C."/>
            <person name="Gaillardin C."/>
            <person name="Weissenbach J."/>
            <person name="Wincker P."/>
            <person name="Souciet J.-L."/>
        </authorList>
    </citation>
    <scope>NUCLEOTIDE SEQUENCE [LARGE SCALE GENOMIC DNA]</scope>
    <source>
        <strain>ATCC 36239 / CBS 767 / BCRC 21394 / JCM 1990 / NBRC 0083 / IGC 2968</strain>
    </source>
</reference>
<accession>Q6BIY6</accession>
<proteinExistence type="inferred from homology"/>
<sequence length="121" mass="13826">MRPSLVRLVRPRRPERKTSPILPPLKLYKALLRAHANKLPVELRPLGDQYVKAEFKAHKNIDNPLHIVGFLAQWQDYLKGIDGGEWINGKLSQQDLEKMSPEQIGQLHELMEEAKKAGASE</sequence>
<feature type="transit peptide" description="Mitochondrion" evidence="3">
    <location>
        <begin position="1"/>
        <end position="35"/>
    </location>
</feature>
<feature type="chain" id="PRO_0000042745" description="Succinate dehydrogenase assembly factor 3, mitochondrial">
    <location>
        <begin position="36"/>
        <end position="121"/>
    </location>
</feature>
<evidence type="ECO:0000250" key="1">
    <source>
        <dbReference type="UniProtKB" id="Q04401"/>
    </source>
</evidence>
<evidence type="ECO:0000250" key="2">
    <source>
        <dbReference type="UniProtKB" id="Q8SZ16"/>
    </source>
</evidence>
<evidence type="ECO:0000255" key="3"/>
<evidence type="ECO:0000305" key="4"/>
<dbReference type="EMBL" id="CR382139">
    <property type="protein sequence ID" value="CAG90296.1"/>
    <property type="molecule type" value="Genomic_DNA"/>
</dbReference>
<dbReference type="RefSeq" id="XP_461835.1">
    <property type="nucleotide sequence ID" value="XM_461835.1"/>
</dbReference>
<dbReference type="SMR" id="Q6BIY6"/>
<dbReference type="FunCoup" id="Q6BIY6">
    <property type="interactions" value="286"/>
</dbReference>
<dbReference type="STRING" id="284592.Q6BIY6"/>
<dbReference type="GeneID" id="2904714"/>
<dbReference type="KEGG" id="dha:DEHA2G06622g"/>
<dbReference type="VEuPathDB" id="FungiDB:DEHA2G06622g"/>
<dbReference type="eggNOG" id="KOG4100">
    <property type="taxonomic scope" value="Eukaryota"/>
</dbReference>
<dbReference type="HOGENOM" id="CLU_102310_1_0_1"/>
<dbReference type="InParanoid" id="Q6BIY6"/>
<dbReference type="OMA" id="WQQTNEN"/>
<dbReference type="OrthoDB" id="278329at2759"/>
<dbReference type="Proteomes" id="UP000000599">
    <property type="component" value="Chromosome G"/>
</dbReference>
<dbReference type="GO" id="GO:0005758">
    <property type="term" value="C:mitochondrial intermembrane space"/>
    <property type="evidence" value="ECO:0007669"/>
    <property type="project" value="EnsemblFungi"/>
</dbReference>
<dbReference type="GO" id="GO:0005759">
    <property type="term" value="C:mitochondrial matrix"/>
    <property type="evidence" value="ECO:0007669"/>
    <property type="project" value="UniProtKB-SubCell"/>
</dbReference>
<dbReference type="GO" id="GO:0015976">
    <property type="term" value="P:carbon utilization"/>
    <property type="evidence" value="ECO:0007669"/>
    <property type="project" value="EnsemblFungi"/>
</dbReference>
<dbReference type="GO" id="GO:0006094">
    <property type="term" value="P:gluconeogenesis"/>
    <property type="evidence" value="ECO:0007669"/>
    <property type="project" value="UniProtKB-KW"/>
</dbReference>
<dbReference type="GO" id="GO:0034553">
    <property type="term" value="P:mitochondrial respiratory chain complex II assembly"/>
    <property type="evidence" value="ECO:0007669"/>
    <property type="project" value="EnsemblFungi"/>
</dbReference>
<dbReference type="GO" id="GO:0006111">
    <property type="term" value="P:regulation of gluconeogenesis"/>
    <property type="evidence" value="ECO:0007669"/>
    <property type="project" value="EnsemblFungi"/>
</dbReference>
<dbReference type="GO" id="GO:0006105">
    <property type="term" value="P:succinate metabolic process"/>
    <property type="evidence" value="ECO:0007669"/>
    <property type="project" value="TreeGrafter"/>
</dbReference>
<dbReference type="CDD" id="cd20270">
    <property type="entry name" value="Complex1_LYR_SDHAF3_LYRM10"/>
    <property type="match status" value="1"/>
</dbReference>
<dbReference type="InterPro" id="IPR008381">
    <property type="entry name" value="SDHAF3/Sdh7"/>
</dbReference>
<dbReference type="PANTHER" id="PTHR13137">
    <property type="entry name" value="DC11 ACN9 HOMOLOG"/>
    <property type="match status" value="1"/>
</dbReference>
<dbReference type="PANTHER" id="PTHR13137:SF6">
    <property type="entry name" value="SUCCINATE DEHYDROGENASE ASSEMBLY FACTOR 3, MITOCHONDRIAL"/>
    <property type="match status" value="1"/>
</dbReference>
<dbReference type="Pfam" id="PF13233">
    <property type="entry name" value="Complex1_LYR_2"/>
    <property type="match status" value="1"/>
</dbReference>
<name>SDHF3_DEBHA</name>
<comment type="function">
    <text evidence="1 2">Plays an essential role in the assembly of succinate dehydrogenase (SDH), an enzyme complex (also referred to as respiratory complex II) that is a component of both the tricarboxylic acid (TCA) cycle and the mitochondrial electron transport chain, and which couples the oxidation of succinate to fumarate with the reduction of ubiquinone (coenzyme Q) to ubiquinol. Promotes maturation of the iron-sulfur protein subunit of the SDH catalytic dimer, protecting it from the deleterious effects of oxidants. May act together with SDHAF1.</text>
</comment>
<comment type="subunit">
    <text evidence="1">Interacts with the iron-sulfur protein subunit within the SDH catalytic dimer.</text>
</comment>
<comment type="subcellular location">
    <subcellularLocation>
        <location evidence="1">Mitochondrion matrix</location>
    </subcellularLocation>
</comment>
<comment type="similarity">
    <text evidence="4">Belongs to the complex I LYR family. SDHAF3 subfamily.</text>
</comment>
<protein>
    <recommendedName>
        <fullName evidence="1">Succinate dehydrogenase assembly factor 3, mitochondrial</fullName>
        <shortName evidence="1">SDH assembly factor 3</shortName>
        <shortName evidence="1">SDHAF3</shortName>
    </recommendedName>
</protein>